<dbReference type="EC" id="1.3.5.1" evidence="1"/>
<dbReference type="EMBL" id="L33409">
    <property type="protein sequence ID" value="AAA74133.1"/>
    <property type="molecule type" value="Genomic_DNA"/>
</dbReference>
<dbReference type="EMBL" id="AE016828">
    <property type="protein sequence ID" value="AAO90900.1"/>
    <property type="molecule type" value="Genomic_DNA"/>
</dbReference>
<dbReference type="PIR" id="I40849">
    <property type="entry name" value="I40849"/>
</dbReference>
<dbReference type="RefSeq" id="NP_820386.1">
    <property type="nucleotide sequence ID" value="NC_002971.4"/>
</dbReference>
<dbReference type="RefSeq" id="WP_010958202.1">
    <property type="nucleotide sequence ID" value="NC_002971.4"/>
</dbReference>
<dbReference type="SMR" id="P51054"/>
<dbReference type="STRING" id="227377.CBU_1401"/>
<dbReference type="DNASU" id="1209307"/>
<dbReference type="EnsemblBacteria" id="AAO90900">
    <property type="protein sequence ID" value="AAO90900"/>
    <property type="gene ID" value="CBU_1401"/>
</dbReference>
<dbReference type="GeneID" id="1209307"/>
<dbReference type="KEGG" id="cbu:CBU_1401"/>
<dbReference type="PATRIC" id="fig|227377.7.peg.1403"/>
<dbReference type="eggNOG" id="COG1053">
    <property type="taxonomic scope" value="Bacteria"/>
</dbReference>
<dbReference type="HOGENOM" id="CLU_014312_6_1_6"/>
<dbReference type="OrthoDB" id="9806724at2"/>
<dbReference type="UniPathway" id="UPA00223">
    <property type="reaction ID" value="UER01005"/>
</dbReference>
<dbReference type="Proteomes" id="UP000002671">
    <property type="component" value="Chromosome"/>
</dbReference>
<dbReference type="GO" id="GO:0005886">
    <property type="term" value="C:plasma membrane"/>
    <property type="evidence" value="ECO:0000318"/>
    <property type="project" value="GO_Central"/>
</dbReference>
<dbReference type="GO" id="GO:0009055">
    <property type="term" value="F:electron transfer activity"/>
    <property type="evidence" value="ECO:0000318"/>
    <property type="project" value="GO_Central"/>
</dbReference>
<dbReference type="GO" id="GO:0050660">
    <property type="term" value="F:flavin adenine dinucleotide binding"/>
    <property type="evidence" value="ECO:0000318"/>
    <property type="project" value="GO_Central"/>
</dbReference>
<dbReference type="GO" id="GO:0008177">
    <property type="term" value="F:succinate dehydrogenase (quinone) activity"/>
    <property type="evidence" value="ECO:0007669"/>
    <property type="project" value="UniProtKB-EC"/>
</dbReference>
<dbReference type="GO" id="GO:0000104">
    <property type="term" value="F:succinate dehydrogenase activity"/>
    <property type="evidence" value="ECO:0000318"/>
    <property type="project" value="GO_Central"/>
</dbReference>
<dbReference type="GO" id="GO:0009061">
    <property type="term" value="P:anaerobic respiration"/>
    <property type="evidence" value="ECO:0000318"/>
    <property type="project" value="GO_Central"/>
</dbReference>
<dbReference type="GO" id="GO:0022900">
    <property type="term" value="P:electron transport chain"/>
    <property type="evidence" value="ECO:0007669"/>
    <property type="project" value="InterPro"/>
</dbReference>
<dbReference type="GO" id="GO:0006099">
    <property type="term" value="P:tricarboxylic acid cycle"/>
    <property type="evidence" value="ECO:0007669"/>
    <property type="project" value="UniProtKB-UniPathway"/>
</dbReference>
<dbReference type="FunFam" id="3.90.700.10:FF:000001">
    <property type="entry name" value="Mitochondrial succinate dehydrogenase flavoprotein subunit"/>
    <property type="match status" value="1"/>
</dbReference>
<dbReference type="FunFam" id="1.20.58.100:FF:000001">
    <property type="entry name" value="Succinate dehydrogenase flavoprotein subunit (SdhA)"/>
    <property type="match status" value="1"/>
</dbReference>
<dbReference type="Gene3D" id="3.50.50.60">
    <property type="entry name" value="FAD/NAD(P)-binding domain"/>
    <property type="match status" value="1"/>
</dbReference>
<dbReference type="Gene3D" id="1.20.58.100">
    <property type="entry name" value="Fumarate reductase/succinate dehydrogenase flavoprotein-like, C-terminal domain"/>
    <property type="match status" value="1"/>
</dbReference>
<dbReference type="Gene3D" id="4.10.80.40">
    <property type="entry name" value="succinate dehydrogenase protein domain"/>
    <property type="match status" value="1"/>
</dbReference>
<dbReference type="Gene3D" id="3.90.700.10">
    <property type="entry name" value="Succinate dehydrogenase/fumarate reductase flavoprotein, catalytic domain"/>
    <property type="match status" value="1"/>
</dbReference>
<dbReference type="InterPro" id="IPR003953">
    <property type="entry name" value="FAD-dep_OxRdtase_2_FAD-bd"/>
</dbReference>
<dbReference type="InterPro" id="IPR036188">
    <property type="entry name" value="FAD/NAD-bd_sf"/>
</dbReference>
<dbReference type="InterPro" id="IPR003952">
    <property type="entry name" value="FRD_SDH_FAD_BS"/>
</dbReference>
<dbReference type="InterPro" id="IPR037099">
    <property type="entry name" value="Fum_R/Succ_DH_flav-like_C_sf"/>
</dbReference>
<dbReference type="InterPro" id="IPR015939">
    <property type="entry name" value="Fum_Rdtase/Succ_DH_flav-like_C"/>
</dbReference>
<dbReference type="InterPro" id="IPR030664">
    <property type="entry name" value="SdhA/FrdA/AprA"/>
</dbReference>
<dbReference type="InterPro" id="IPR027477">
    <property type="entry name" value="Succ_DH/fumarate_Rdtase_cat_sf"/>
</dbReference>
<dbReference type="InterPro" id="IPR011281">
    <property type="entry name" value="Succ_DH_flav_su_fwd"/>
</dbReference>
<dbReference type="InterPro" id="IPR014006">
    <property type="entry name" value="Succ_Dhase_FrdA_Gneg"/>
</dbReference>
<dbReference type="NCBIfam" id="TIGR01816">
    <property type="entry name" value="sdhA_forward"/>
    <property type="match status" value="1"/>
</dbReference>
<dbReference type="NCBIfam" id="TIGR01812">
    <property type="entry name" value="sdhA_frdA_Gneg"/>
    <property type="match status" value="1"/>
</dbReference>
<dbReference type="PANTHER" id="PTHR11632">
    <property type="entry name" value="SUCCINATE DEHYDROGENASE 2 FLAVOPROTEIN SUBUNIT"/>
    <property type="match status" value="1"/>
</dbReference>
<dbReference type="PANTHER" id="PTHR11632:SF51">
    <property type="entry name" value="SUCCINATE DEHYDROGENASE [UBIQUINONE] FLAVOPROTEIN SUBUNIT, MITOCHONDRIAL"/>
    <property type="match status" value="1"/>
</dbReference>
<dbReference type="Pfam" id="PF00890">
    <property type="entry name" value="FAD_binding_2"/>
    <property type="match status" value="1"/>
</dbReference>
<dbReference type="Pfam" id="PF02910">
    <property type="entry name" value="Succ_DH_flav_C"/>
    <property type="match status" value="1"/>
</dbReference>
<dbReference type="PIRSF" id="PIRSF000171">
    <property type="entry name" value="SDHA_APRA_LASPO"/>
    <property type="match status" value="1"/>
</dbReference>
<dbReference type="SUPFAM" id="SSF51905">
    <property type="entry name" value="FAD/NAD(P)-binding domain"/>
    <property type="match status" value="1"/>
</dbReference>
<dbReference type="SUPFAM" id="SSF46977">
    <property type="entry name" value="Succinate dehydrogenase/fumarate reductase flavoprotein C-terminal domain"/>
    <property type="match status" value="1"/>
</dbReference>
<dbReference type="SUPFAM" id="SSF56425">
    <property type="entry name" value="Succinate dehydrogenase/fumarate reductase flavoprotein, catalytic domain"/>
    <property type="match status" value="1"/>
</dbReference>
<dbReference type="PROSITE" id="PS00504">
    <property type="entry name" value="FRD_SDH_FAD_BINDING"/>
    <property type="match status" value="1"/>
</dbReference>
<evidence type="ECO:0000250" key="1">
    <source>
        <dbReference type="UniProtKB" id="P0AC41"/>
    </source>
</evidence>
<evidence type="ECO:0000305" key="2"/>
<organism>
    <name type="scientific">Coxiella burnetii (strain RSA 493 / Nine Mile phase I)</name>
    <dbReference type="NCBI Taxonomy" id="227377"/>
    <lineage>
        <taxon>Bacteria</taxon>
        <taxon>Pseudomonadati</taxon>
        <taxon>Pseudomonadota</taxon>
        <taxon>Gammaproteobacteria</taxon>
        <taxon>Legionellales</taxon>
        <taxon>Coxiellaceae</taxon>
        <taxon>Coxiella</taxon>
    </lineage>
</organism>
<reference key="1">
    <citation type="journal article" date="1995" name="Gene">
        <title>Characterization of the succinate dehydrogenase-encoding gene cluster (sdh) from the rickettsia Coxiella burnetii.</title>
        <authorList>
            <person name="Heinzen R.A."/>
            <person name="Mo Y.-Y."/>
            <person name="Robertson S.J."/>
            <person name="Mallavia L.P."/>
        </authorList>
    </citation>
    <scope>NUCLEOTIDE SEQUENCE [GENOMIC DNA]</scope>
    <source>
        <strain>Nine Mile</strain>
    </source>
</reference>
<reference key="2">
    <citation type="journal article" date="2003" name="Proc. Natl. Acad. Sci. U.S.A.">
        <title>Complete genome sequence of the Q-fever pathogen, Coxiella burnetii.</title>
        <authorList>
            <person name="Seshadri R."/>
            <person name="Paulsen I.T."/>
            <person name="Eisen J.A."/>
            <person name="Read T.D."/>
            <person name="Nelson K.E."/>
            <person name="Nelson W.C."/>
            <person name="Ward N.L."/>
            <person name="Tettelin H."/>
            <person name="Davidsen T.M."/>
            <person name="Beanan M.J."/>
            <person name="DeBoy R.T."/>
            <person name="Daugherty S.C."/>
            <person name="Brinkac L.M."/>
            <person name="Madupu R."/>
            <person name="Dodson R.J."/>
            <person name="Khouri H.M."/>
            <person name="Lee K.H."/>
            <person name="Carty H.A."/>
            <person name="Scanlan D."/>
            <person name="Heinzen R.A."/>
            <person name="Thompson H.A."/>
            <person name="Samuel J.E."/>
            <person name="Fraser C.M."/>
            <person name="Heidelberg J.F."/>
        </authorList>
    </citation>
    <scope>NUCLEOTIDE SEQUENCE [LARGE SCALE GENOMIC DNA]</scope>
    <source>
        <strain>RSA 493 / Nine Mile phase I</strain>
    </source>
</reference>
<feature type="chain" id="PRO_0000158651" description="Succinate dehydrogenase flavoprotein subunit">
    <location>
        <begin position="1"/>
        <end position="587"/>
    </location>
</feature>
<feature type="active site" description="Proton acceptor" evidence="1">
    <location>
        <position position="288"/>
    </location>
</feature>
<feature type="binding site" evidence="1">
    <location>
        <begin position="15"/>
        <end position="20"/>
    </location>
    <ligand>
        <name>FAD</name>
        <dbReference type="ChEBI" id="CHEBI:57692"/>
    </ligand>
</feature>
<feature type="binding site" evidence="1">
    <location>
        <begin position="39"/>
        <end position="54"/>
    </location>
    <ligand>
        <name>FAD</name>
        <dbReference type="ChEBI" id="CHEBI:57692"/>
    </ligand>
</feature>
<feature type="binding site" evidence="1">
    <location>
        <position position="223"/>
    </location>
    <ligand>
        <name>FAD</name>
        <dbReference type="ChEBI" id="CHEBI:57692"/>
    </ligand>
</feature>
<feature type="binding site" evidence="1">
    <location>
        <position position="244"/>
    </location>
    <ligand>
        <name>substrate</name>
    </ligand>
</feature>
<feature type="binding site" evidence="1">
    <location>
        <position position="256"/>
    </location>
    <ligand>
        <name>substrate</name>
    </ligand>
</feature>
<feature type="binding site" evidence="1">
    <location>
        <position position="355"/>
    </location>
    <ligand>
        <name>substrate</name>
    </ligand>
</feature>
<feature type="binding site" evidence="1">
    <location>
        <position position="389"/>
    </location>
    <ligand>
        <name>FAD</name>
        <dbReference type="ChEBI" id="CHEBI:57692"/>
    </ligand>
</feature>
<feature type="binding site" evidence="1">
    <location>
        <position position="400"/>
    </location>
    <ligand>
        <name>substrate</name>
    </ligand>
</feature>
<feature type="binding site" evidence="1">
    <location>
        <begin position="405"/>
        <end position="406"/>
    </location>
    <ligand>
        <name>FAD</name>
        <dbReference type="ChEBI" id="CHEBI:57692"/>
    </ligand>
</feature>
<feature type="modified residue" description="Tele-8alpha-FAD histidine" evidence="1">
    <location>
        <position position="47"/>
    </location>
</feature>
<name>SDHA_COXBU</name>
<protein>
    <recommendedName>
        <fullName>Succinate dehydrogenase flavoprotein subunit</fullName>
        <ecNumber evidence="1">1.3.5.1</ecNumber>
    </recommendedName>
</protein>
<keyword id="KW-0997">Cell inner membrane</keyword>
<keyword id="KW-1003">Cell membrane</keyword>
<keyword id="KW-0249">Electron transport</keyword>
<keyword id="KW-0274">FAD</keyword>
<keyword id="KW-0285">Flavoprotein</keyword>
<keyword id="KW-0472">Membrane</keyword>
<keyword id="KW-0560">Oxidoreductase</keyword>
<keyword id="KW-1185">Reference proteome</keyword>
<keyword id="KW-0813">Transport</keyword>
<keyword id="KW-0816">Tricarboxylic acid cycle</keyword>
<proteinExistence type="inferred from homology"/>
<sequence>MSSIRVKQYDALIVGAGGAGLRAALEMAQSRQYKVAVVSKVFPTRSHTVSAQGGIAAALGNVVPDKPIWHMFDTVKGSDYLGDQDAIQYMCEQAPPSVYELEHYGLPFSRLDDGRIYQRAFGGHTRDFGKEMARRTCACADRTGHAMLHTLYQKNVEAGTHFYYEWYGIDLVRGAQGGIAGMIAMNMETSELVFFKSRATIFATGGAGRIYETTSNAYTNTGDGIGMVLRAGLPVQDMEFWQFHPTGIYGVGCLITEGARGEGGYLINKDGERFMERYSPHLKDLDCRDVVARSILQEVMAGGGVGPKKDHVLLKLDHLGEKVLRERLPGIIELSEKFANVDITKEPIPILPTCHYMMGGIPTNIHGQALTVDENGKDQIIEGLFAAGECACVSVHGANRLGTNSLLDLVVFGRAIGLHLEEALKTELKHRSENPDDIDAAIARLKRWEKPNNVENPALLRQEMRKAMSEDFGVFREEQKMKQGLERLQKLNERLQRAKLTDTSRTFNNARIEALELDNLMEVSYATAVSAQQRTESRGAHSRYDYKERDDANWLKHTVYFRDGHIAYRPVNMKPKGMDPFPPKSRD</sequence>
<gene>
    <name type="primary">sdhA</name>
    <name type="ordered locus">CBU_1401</name>
</gene>
<accession>P51054</accession>
<comment type="catalytic activity">
    <reaction evidence="1">
        <text>a quinone + succinate = fumarate + a quinol</text>
        <dbReference type="Rhea" id="RHEA:40523"/>
        <dbReference type="ChEBI" id="CHEBI:24646"/>
        <dbReference type="ChEBI" id="CHEBI:29806"/>
        <dbReference type="ChEBI" id="CHEBI:30031"/>
        <dbReference type="ChEBI" id="CHEBI:132124"/>
        <dbReference type="EC" id="1.3.5.1"/>
    </reaction>
</comment>
<comment type="cofactor">
    <cofactor evidence="1">
        <name>FAD</name>
        <dbReference type="ChEBI" id="CHEBI:57692"/>
    </cofactor>
</comment>
<comment type="pathway">
    <text evidence="1">Carbohydrate metabolism; tricarboxylic acid cycle; fumarate from succinate (bacterial route): step 1/1.</text>
</comment>
<comment type="subunit">
    <text evidence="1">Part of an enzyme complex containing four subunits: a flavoprotein, an iron-sulfur protein, cytochrome b-556 and a hydrophobic protein.</text>
</comment>
<comment type="subcellular location">
    <subcellularLocation>
        <location evidence="1">Cell inner membrane</location>
        <topology evidence="1">Peripheral membrane protein</topology>
        <orientation evidence="1">Cytoplasmic side</orientation>
    </subcellularLocation>
</comment>
<comment type="similarity">
    <text evidence="2">Belongs to the FAD-dependent oxidoreductase 2 family. FRD/SDH subfamily.</text>
</comment>